<proteinExistence type="evidence at transcript level"/>
<gene>
    <name type="primary">ACS3</name>
</gene>
<sequence>MESLKEMRKAQMSEGPAAILAIGTANPDNVYMQADYPDYYFKMTKSEHMTELKDKFRTLCEKSMIRKRHMCFSEEFLKANPEVCKHMGKSLNARQDIAVVETPRLGNEAAVKAIKEWGQPKSSITHLIFCSSAGVDMPGADYQLTRILGLNPSVKRMMIYQQGCYAGGTVLRLAKDLAENNKGSRVLVVCSELTAPTFRGPSPDAVDSLVGQALFADGAAALVVGADPDSSIERALYYLVSASQMLLPDSDGAIEGHIREEGLTVHLKKDVPALFSGNIDTPLVEAFKPLGISDWNSIFWIAHPGGPAILDQIEEKLGLKEDKLRASKHVMSEYGNMSSSCVLFVLDEMRSRSLQDGKSTTGEGLDWGVLFGFGPGLTVETIVLRSVPIEA</sequence>
<comment type="catalytic activity">
    <reaction>
        <text>N-methylanthraniloyl-CoA + 3 malonyl-CoA + 3 H(+) = 1,3-dihydroxy-N-methylacridone + 3 CO2 + 4 CoA + H2O</text>
        <dbReference type="Rhea" id="RHEA:22224"/>
        <dbReference type="ChEBI" id="CHEBI:15377"/>
        <dbReference type="ChEBI" id="CHEBI:15378"/>
        <dbReference type="ChEBI" id="CHEBI:16526"/>
        <dbReference type="ChEBI" id="CHEBI:30306"/>
        <dbReference type="ChEBI" id="CHEBI:57287"/>
        <dbReference type="ChEBI" id="CHEBI:57384"/>
        <dbReference type="ChEBI" id="CHEBI:58630"/>
        <dbReference type="EC" id="2.3.1.159"/>
    </reaction>
</comment>
<comment type="similarity">
    <text evidence="2">Belongs to the thiolase-like superfamily. Chalcone/stilbene synthases family.</text>
</comment>
<accession>Q9FSC2</accession>
<feature type="chain" id="PRO_0000216088" description="Probable acridone synthase 3">
    <location>
        <begin position="1"/>
        <end position="391"/>
    </location>
</feature>
<feature type="active site" evidence="1">
    <location>
        <position position="164"/>
    </location>
</feature>
<evidence type="ECO:0000255" key="1">
    <source>
        <dbReference type="PROSITE-ProRule" id="PRU10023"/>
    </source>
</evidence>
<evidence type="ECO:0000305" key="2"/>
<reference key="1">
    <citation type="submission" date="2000-10" db="EMBL/GenBank/DDBJ databases">
        <authorList>
            <person name="Springob K."/>
            <person name="Matern U."/>
        </authorList>
    </citation>
    <scope>NUCLEOTIDE SEQUENCE [MRNA]</scope>
    <source>
        <tissue>Immature flower</tissue>
    </source>
</reference>
<protein>
    <recommendedName>
        <fullName>Probable acridone synthase 3</fullName>
        <ecNumber>2.3.1.159</ecNumber>
    </recommendedName>
    <alternativeName>
        <fullName>Acridone synthase III</fullName>
    </alternativeName>
</protein>
<organism>
    <name type="scientific">Ruta graveolens</name>
    <name type="common">Common rue</name>
    <dbReference type="NCBI Taxonomy" id="37565"/>
    <lineage>
        <taxon>Eukaryota</taxon>
        <taxon>Viridiplantae</taxon>
        <taxon>Streptophyta</taxon>
        <taxon>Embryophyta</taxon>
        <taxon>Tracheophyta</taxon>
        <taxon>Spermatophyta</taxon>
        <taxon>Magnoliopsida</taxon>
        <taxon>eudicotyledons</taxon>
        <taxon>Gunneridae</taxon>
        <taxon>Pentapetalae</taxon>
        <taxon>rosids</taxon>
        <taxon>malvids</taxon>
        <taxon>Sapindales</taxon>
        <taxon>Rutaceae</taxon>
        <taxon>Rutoideae</taxon>
        <taxon>Ruta</taxon>
    </lineage>
</organism>
<dbReference type="EC" id="2.3.1.159"/>
<dbReference type="EMBL" id="AJ297786">
    <property type="protein sequence ID" value="CAC14056.2"/>
    <property type="molecule type" value="mRNA"/>
</dbReference>
<dbReference type="PIR" id="S60241">
    <property type="entry name" value="S60241"/>
</dbReference>
<dbReference type="SMR" id="Q9FSC2"/>
<dbReference type="GO" id="GO:0050635">
    <property type="term" value="F:acridone synthase activity"/>
    <property type="evidence" value="ECO:0007669"/>
    <property type="project" value="UniProtKB-EC"/>
</dbReference>
<dbReference type="GO" id="GO:0009813">
    <property type="term" value="P:flavonoid biosynthetic process"/>
    <property type="evidence" value="ECO:0007669"/>
    <property type="project" value="UniProtKB-KW"/>
</dbReference>
<dbReference type="GO" id="GO:0030639">
    <property type="term" value="P:polyketide biosynthetic process"/>
    <property type="evidence" value="ECO:0007669"/>
    <property type="project" value="TreeGrafter"/>
</dbReference>
<dbReference type="CDD" id="cd00831">
    <property type="entry name" value="CHS_like"/>
    <property type="match status" value="1"/>
</dbReference>
<dbReference type="FunFam" id="3.40.47.10:FF:000014">
    <property type="entry name" value="Chalcone synthase 1"/>
    <property type="match status" value="1"/>
</dbReference>
<dbReference type="FunFam" id="3.40.47.10:FF:000025">
    <property type="entry name" value="Chalcone synthase 2"/>
    <property type="match status" value="1"/>
</dbReference>
<dbReference type="Gene3D" id="3.40.47.10">
    <property type="match status" value="2"/>
</dbReference>
<dbReference type="InterPro" id="IPR012328">
    <property type="entry name" value="Chalcone/stilbene_synt_C"/>
</dbReference>
<dbReference type="InterPro" id="IPR001099">
    <property type="entry name" value="Chalcone/stilbene_synt_N"/>
</dbReference>
<dbReference type="InterPro" id="IPR018088">
    <property type="entry name" value="Chalcone/stilbene_synthase_AS"/>
</dbReference>
<dbReference type="InterPro" id="IPR011141">
    <property type="entry name" value="Polyketide_synthase_type-III"/>
</dbReference>
<dbReference type="InterPro" id="IPR016039">
    <property type="entry name" value="Thiolase-like"/>
</dbReference>
<dbReference type="PANTHER" id="PTHR11877:SF14">
    <property type="entry name" value="CHALCONE SYNTHASE"/>
    <property type="match status" value="1"/>
</dbReference>
<dbReference type="PANTHER" id="PTHR11877">
    <property type="entry name" value="HYDROXYMETHYLGLUTARYL-COA SYNTHASE"/>
    <property type="match status" value="1"/>
</dbReference>
<dbReference type="Pfam" id="PF02797">
    <property type="entry name" value="Chal_sti_synt_C"/>
    <property type="match status" value="1"/>
</dbReference>
<dbReference type="Pfam" id="PF00195">
    <property type="entry name" value="Chal_sti_synt_N"/>
    <property type="match status" value="1"/>
</dbReference>
<dbReference type="PIRSF" id="PIRSF000451">
    <property type="entry name" value="PKS_III"/>
    <property type="match status" value="1"/>
</dbReference>
<dbReference type="SUPFAM" id="SSF53901">
    <property type="entry name" value="Thiolase-like"/>
    <property type="match status" value="2"/>
</dbReference>
<dbReference type="PROSITE" id="PS00441">
    <property type="entry name" value="CHALCONE_SYNTH"/>
    <property type="match status" value="1"/>
</dbReference>
<keyword id="KW-0012">Acyltransferase</keyword>
<keyword id="KW-0284">Flavonoid biosynthesis</keyword>
<keyword id="KW-0808">Transferase</keyword>
<name>ACS3_RUTGR</name>